<dbReference type="EMBL" id="AC122305">
    <property type="status" value="NOT_ANNOTATED_CDS"/>
    <property type="molecule type" value="Genomic_DNA"/>
</dbReference>
<dbReference type="EMBL" id="AC166051">
    <property type="status" value="NOT_ANNOTATED_CDS"/>
    <property type="molecule type" value="Genomic_DNA"/>
</dbReference>
<dbReference type="EMBL" id="BC049352">
    <property type="status" value="NOT_ANNOTATED_CDS"/>
    <property type="molecule type" value="mRNA"/>
</dbReference>
<dbReference type="CCDS" id="CCDS52782.1"/>
<dbReference type="RefSeq" id="NP_001185900.1">
    <property type="nucleotide sequence ID" value="NM_001198971.1"/>
</dbReference>
<dbReference type="SMR" id="E9Q2Z6"/>
<dbReference type="PaxDb" id="10090-ENSMUSP00000132091"/>
<dbReference type="ProteomicsDB" id="261237"/>
<dbReference type="Ensembl" id="ENSMUST00000171799.4">
    <property type="protein sequence ID" value="ENSMUSP00000132091.2"/>
    <property type="gene ID" value="ENSMUSG00000091996.9"/>
</dbReference>
<dbReference type="GeneID" id="408059"/>
<dbReference type="KEGG" id="mmu:408059"/>
<dbReference type="UCSC" id="uc009pfm.1">
    <property type="organism name" value="mouse"/>
</dbReference>
<dbReference type="AGR" id="MGI:3040681"/>
<dbReference type="CTD" id="100526771"/>
<dbReference type="MGI" id="MGI:3040681">
    <property type="gene designation" value="Smim35"/>
</dbReference>
<dbReference type="VEuPathDB" id="HostDB:ENSMUSG00000091996"/>
<dbReference type="eggNOG" id="ENOG502RWWG">
    <property type="taxonomic scope" value="Eukaryota"/>
</dbReference>
<dbReference type="GeneTree" id="ENSGT00670000099483"/>
<dbReference type="HOGENOM" id="CLU_2533463_0_0_1"/>
<dbReference type="InParanoid" id="E9Q2Z6"/>
<dbReference type="OMA" id="PDGGYMK"/>
<dbReference type="OrthoDB" id="9946257at2759"/>
<dbReference type="BioGRID-ORCS" id="408059">
    <property type="hits" value="3 hits in 76 CRISPR screens"/>
</dbReference>
<dbReference type="ChiTaRS" id="BC049352">
    <property type="organism name" value="mouse"/>
</dbReference>
<dbReference type="PRO" id="PR:E9Q2Z6"/>
<dbReference type="Proteomes" id="UP000000589">
    <property type="component" value="Chromosome 9"/>
</dbReference>
<dbReference type="RNAct" id="E9Q2Z6">
    <property type="molecule type" value="protein"/>
</dbReference>
<dbReference type="Bgee" id="ENSMUSG00000091996">
    <property type="expression patterns" value="Expressed in quadriceps femoris and 36 other cell types or tissues"/>
</dbReference>
<dbReference type="GO" id="GO:0016020">
    <property type="term" value="C:membrane"/>
    <property type="evidence" value="ECO:0007669"/>
    <property type="project" value="UniProtKB-SubCell"/>
</dbReference>
<organism>
    <name type="scientific">Mus musculus</name>
    <name type="common">Mouse</name>
    <dbReference type="NCBI Taxonomy" id="10090"/>
    <lineage>
        <taxon>Eukaryota</taxon>
        <taxon>Metazoa</taxon>
        <taxon>Chordata</taxon>
        <taxon>Craniata</taxon>
        <taxon>Vertebrata</taxon>
        <taxon>Euteleostomi</taxon>
        <taxon>Mammalia</taxon>
        <taxon>Eutheria</taxon>
        <taxon>Euarchontoglires</taxon>
        <taxon>Glires</taxon>
        <taxon>Rodentia</taxon>
        <taxon>Myomorpha</taxon>
        <taxon>Muroidea</taxon>
        <taxon>Muridae</taxon>
        <taxon>Murinae</taxon>
        <taxon>Mus</taxon>
        <taxon>Mus</taxon>
    </lineage>
</organism>
<feature type="chain" id="PRO_0000443402" description="Small integral membrane protein 35">
    <location>
        <begin position="1"/>
        <end position="85"/>
    </location>
</feature>
<feature type="transmembrane region" description="Helical" evidence="1">
    <location>
        <begin position="7"/>
        <end position="27"/>
    </location>
</feature>
<proteinExistence type="inferred from homology"/>
<sequence>MAGDDSISTLGMILGVGLSLLLVSILGYSLAKWYQRGYCWDGPNFVFNLYQIRNLKDLEVGPPFTISGHMSSPDGGYMKFSNDRV</sequence>
<gene>
    <name evidence="2" type="primary">Smim35</name>
</gene>
<comment type="subcellular location">
    <subcellularLocation>
        <location evidence="1">Membrane</location>
        <topology evidence="1">Single-pass membrane protein</topology>
    </subcellularLocation>
</comment>
<accession>E9Q2Z6</accession>
<reference key="1">
    <citation type="journal article" date="2009" name="PLoS Biol.">
        <title>Lineage-specific biology revealed by a finished genome assembly of the mouse.</title>
        <authorList>
            <person name="Church D.M."/>
            <person name="Goodstadt L."/>
            <person name="Hillier L.W."/>
            <person name="Zody M.C."/>
            <person name="Goldstein S."/>
            <person name="She X."/>
            <person name="Bult C.J."/>
            <person name="Agarwala R."/>
            <person name="Cherry J.L."/>
            <person name="DiCuccio M."/>
            <person name="Hlavina W."/>
            <person name="Kapustin Y."/>
            <person name="Meric P."/>
            <person name="Maglott D."/>
            <person name="Birtle Z."/>
            <person name="Marques A.C."/>
            <person name="Graves T."/>
            <person name="Zhou S."/>
            <person name="Teague B."/>
            <person name="Potamousis K."/>
            <person name="Churas C."/>
            <person name="Place M."/>
            <person name="Herschleb J."/>
            <person name="Runnheim R."/>
            <person name="Forrest D."/>
            <person name="Amos-Landgraf J."/>
            <person name="Schwartz D.C."/>
            <person name="Cheng Z."/>
            <person name="Lindblad-Toh K."/>
            <person name="Eichler E.E."/>
            <person name="Ponting C.P."/>
        </authorList>
    </citation>
    <scope>NUCLEOTIDE SEQUENCE [LARGE SCALE GENOMIC DNA]</scope>
    <source>
        <strain>C57BL/6J</strain>
    </source>
</reference>
<reference key="2">
    <citation type="journal article" date="2004" name="Genome Res.">
        <title>The status, quality, and expansion of the NIH full-length cDNA project: the Mammalian Gene Collection (MGC).</title>
        <authorList>
            <consortium name="The MGC Project Team"/>
        </authorList>
    </citation>
    <scope>NUCLEOTIDE SEQUENCE [LARGE SCALE MRNA]</scope>
</reference>
<name>SIM35_MOUSE</name>
<evidence type="ECO:0000255" key="1"/>
<evidence type="ECO:0000312" key="2">
    <source>
        <dbReference type="MGI" id="MGI:3040681"/>
    </source>
</evidence>
<keyword id="KW-0472">Membrane</keyword>
<keyword id="KW-1185">Reference proteome</keyword>
<keyword id="KW-0812">Transmembrane</keyword>
<keyword id="KW-1133">Transmembrane helix</keyword>
<protein>
    <recommendedName>
        <fullName evidence="2">Small integral membrane protein 35</fullName>
    </recommendedName>
</protein>